<keyword id="KW-0488">Methylation</keyword>
<keyword id="KW-1185">Reference proteome</keyword>
<keyword id="KW-0687">Ribonucleoprotein</keyword>
<keyword id="KW-0689">Ribosomal protein</keyword>
<keyword id="KW-0694">RNA-binding</keyword>
<keyword id="KW-0699">rRNA-binding</keyword>
<feature type="chain" id="PRO_1000195631" description="Large ribosomal subunit protein uL11">
    <location>
        <begin position="1"/>
        <end position="142"/>
    </location>
</feature>
<gene>
    <name evidence="1" type="primary">rplK</name>
    <name type="ordered locus">E2348C_4290</name>
</gene>
<organism>
    <name type="scientific">Escherichia coli O127:H6 (strain E2348/69 / EPEC)</name>
    <dbReference type="NCBI Taxonomy" id="574521"/>
    <lineage>
        <taxon>Bacteria</taxon>
        <taxon>Pseudomonadati</taxon>
        <taxon>Pseudomonadota</taxon>
        <taxon>Gammaproteobacteria</taxon>
        <taxon>Enterobacterales</taxon>
        <taxon>Enterobacteriaceae</taxon>
        <taxon>Escherichia</taxon>
    </lineage>
</organism>
<accession>B7UPD8</accession>
<dbReference type="EMBL" id="FM180568">
    <property type="protein sequence ID" value="CAS11838.1"/>
    <property type="molecule type" value="Genomic_DNA"/>
</dbReference>
<dbReference type="RefSeq" id="WP_001085926.1">
    <property type="nucleotide sequence ID" value="NC_011601.1"/>
</dbReference>
<dbReference type="SMR" id="B7UPD8"/>
<dbReference type="GeneID" id="93777911"/>
<dbReference type="KEGG" id="ecg:E2348C_4290"/>
<dbReference type="HOGENOM" id="CLU_074237_2_0_6"/>
<dbReference type="Proteomes" id="UP000008205">
    <property type="component" value="Chromosome"/>
</dbReference>
<dbReference type="GO" id="GO:0022625">
    <property type="term" value="C:cytosolic large ribosomal subunit"/>
    <property type="evidence" value="ECO:0007669"/>
    <property type="project" value="TreeGrafter"/>
</dbReference>
<dbReference type="GO" id="GO:0070180">
    <property type="term" value="F:large ribosomal subunit rRNA binding"/>
    <property type="evidence" value="ECO:0007669"/>
    <property type="project" value="UniProtKB-UniRule"/>
</dbReference>
<dbReference type="GO" id="GO:0003735">
    <property type="term" value="F:structural constituent of ribosome"/>
    <property type="evidence" value="ECO:0007669"/>
    <property type="project" value="InterPro"/>
</dbReference>
<dbReference type="GO" id="GO:0006412">
    <property type="term" value="P:translation"/>
    <property type="evidence" value="ECO:0007669"/>
    <property type="project" value="UniProtKB-UniRule"/>
</dbReference>
<dbReference type="CDD" id="cd00349">
    <property type="entry name" value="Ribosomal_L11"/>
    <property type="match status" value="1"/>
</dbReference>
<dbReference type="FunFam" id="1.10.10.250:FF:000001">
    <property type="entry name" value="50S ribosomal protein L11"/>
    <property type="match status" value="1"/>
</dbReference>
<dbReference type="FunFam" id="3.30.1550.10:FF:000001">
    <property type="entry name" value="50S ribosomal protein L11"/>
    <property type="match status" value="1"/>
</dbReference>
<dbReference type="Gene3D" id="1.10.10.250">
    <property type="entry name" value="Ribosomal protein L11, C-terminal domain"/>
    <property type="match status" value="1"/>
</dbReference>
<dbReference type="Gene3D" id="3.30.1550.10">
    <property type="entry name" value="Ribosomal protein L11/L12, N-terminal domain"/>
    <property type="match status" value="1"/>
</dbReference>
<dbReference type="HAMAP" id="MF_00736">
    <property type="entry name" value="Ribosomal_uL11"/>
    <property type="match status" value="1"/>
</dbReference>
<dbReference type="InterPro" id="IPR000911">
    <property type="entry name" value="Ribosomal_uL11"/>
</dbReference>
<dbReference type="InterPro" id="IPR006519">
    <property type="entry name" value="Ribosomal_uL11_bac-typ"/>
</dbReference>
<dbReference type="InterPro" id="IPR020783">
    <property type="entry name" value="Ribosomal_uL11_C"/>
</dbReference>
<dbReference type="InterPro" id="IPR036769">
    <property type="entry name" value="Ribosomal_uL11_C_sf"/>
</dbReference>
<dbReference type="InterPro" id="IPR020785">
    <property type="entry name" value="Ribosomal_uL11_CS"/>
</dbReference>
<dbReference type="InterPro" id="IPR020784">
    <property type="entry name" value="Ribosomal_uL11_N"/>
</dbReference>
<dbReference type="InterPro" id="IPR036796">
    <property type="entry name" value="Ribosomal_uL11_N_sf"/>
</dbReference>
<dbReference type="NCBIfam" id="TIGR01632">
    <property type="entry name" value="L11_bact"/>
    <property type="match status" value="1"/>
</dbReference>
<dbReference type="PANTHER" id="PTHR11661">
    <property type="entry name" value="60S RIBOSOMAL PROTEIN L12"/>
    <property type="match status" value="1"/>
</dbReference>
<dbReference type="PANTHER" id="PTHR11661:SF1">
    <property type="entry name" value="LARGE RIBOSOMAL SUBUNIT PROTEIN UL11M"/>
    <property type="match status" value="1"/>
</dbReference>
<dbReference type="Pfam" id="PF00298">
    <property type="entry name" value="Ribosomal_L11"/>
    <property type="match status" value="1"/>
</dbReference>
<dbReference type="Pfam" id="PF03946">
    <property type="entry name" value="Ribosomal_L11_N"/>
    <property type="match status" value="1"/>
</dbReference>
<dbReference type="SMART" id="SM00649">
    <property type="entry name" value="RL11"/>
    <property type="match status" value="1"/>
</dbReference>
<dbReference type="SUPFAM" id="SSF54747">
    <property type="entry name" value="Ribosomal L11/L12e N-terminal domain"/>
    <property type="match status" value="1"/>
</dbReference>
<dbReference type="SUPFAM" id="SSF46906">
    <property type="entry name" value="Ribosomal protein L11, C-terminal domain"/>
    <property type="match status" value="1"/>
</dbReference>
<dbReference type="PROSITE" id="PS00359">
    <property type="entry name" value="RIBOSOMAL_L11"/>
    <property type="match status" value="1"/>
</dbReference>
<protein>
    <recommendedName>
        <fullName evidence="1">Large ribosomal subunit protein uL11</fullName>
    </recommendedName>
    <alternativeName>
        <fullName evidence="2">50S ribosomal protein L11</fullName>
    </alternativeName>
</protein>
<evidence type="ECO:0000255" key="1">
    <source>
        <dbReference type="HAMAP-Rule" id="MF_00736"/>
    </source>
</evidence>
<evidence type="ECO:0000305" key="2"/>
<name>RL11_ECO27</name>
<proteinExistence type="inferred from homology"/>
<sequence length="142" mass="14875">MAKKVQAYVKLQVAAGMANPSPPVGPALGQQGVNIMEFCKAFNAKTDSIEKGLPIPVVITVYADRSFTFVTKTPPAAVLLKKAAGIKSGSGKPNKDKVGKISRAQLQEIAQTKAADMTGADIEAMTRSIEGTARSMGLVVED</sequence>
<comment type="function">
    <text evidence="1">Forms part of the ribosomal stalk which helps the ribosome interact with GTP-bound translation factors.</text>
</comment>
<comment type="subunit">
    <text evidence="1">Part of the ribosomal stalk of the 50S ribosomal subunit. Interacts with L10 and the large rRNA to form the base of the stalk. L10 forms an elongated spine to which L12 dimers bind in a sequential fashion forming a multimeric L10(L12)X complex.</text>
</comment>
<comment type="PTM">
    <text evidence="1">One or more lysine residues are methylated.</text>
</comment>
<comment type="similarity">
    <text evidence="1">Belongs to the universal ribosomal protein uL11 family.</text>
</comment>
<reference key="1">
    <citation type="journal article" date="2009" name="J. Bacteriol.">
        <title>Complete genome sequence and comparative genome analysis of enteropathogenic Escherichia coli O127:H6 strain E2348/69.</title>
        <authorList>
            <person name="Iguchi A."/>
            <person name="Thomson N.R."/>
            <person name="Ogura Y."/>
            <person name="Saunders D."/>
            <person name="Ooka T."/>
            <person name="Henderson I.R."/>
            <person name="Harris D."/>
            <person name="Asadulghani M."/>
            <person name="Kurokawa K."/>
            <person name="Dean P."/>
            <person name="Kenny B."/>
            <person name="Quail M.A."/>
            <person name="Thurston S."/>
            <person name="Dougan G."/>
            <person name="Hayashi T."/>
            <person name="Parkhill J."/>
            <person name="Frankel G."/>
        </authorList>
    </citation>
    <scope>NUCLEOTIDE SEQUENCE [LARGE SCALE GENOMIC DNA]</scope>
    <source>
        <strain>E2348/69 / EPEC</strain>
    </source>
</reference>